<organism>
    <name type="scientific">Schwanniomyces occidentalis</name>
    <name type="common">Yeast</name>
    <name type="synonym">Debaryomyces occidentalis</name>
    <dbReference type="NCBI Taxonomy" id="27300"/>
    <lineage>
        <taxon>Eukaryota</taxon>
        <taxon>Fungi</taxon>
        <taxon>Dikarya</taxon>
        <taxon>Ascomycota</taxon>
        <taxon>Saccharomycotina</taxon>
        <taxon>Pichiomycetes</taxon>
        <taxon>Debaryomycetaceae</taxon>
        <taxon>Schwanniomyces</taxon>
    </lineage>
</organism>
<proteinExistence type="evidence at protein level"/>
<feature type="signal peptide" evidence="3">
    <location>
        <begin position="1"/>
        <end position="25"/>
    </location>
</feature>
<feature type="chain" id="PRO_0000001352" description="Alpha-amylase 1">
    <location>
        <begin position="26"/>
        <end position="512"/>
    </location>
</feature>
<feature type="active site" description="Nucleophile" evidence="2">
    <location>
        <position position="242"/>
    </location>
</feature>
<feature type="active site" description="Proton donor" evidence="2">
    <location>
        <position position="266"/>
    </location>
</feature>
<feature type="binding site" evidence="1">
    <location>
        <position position="119"/>
    </location>
    <ligand>
        <name>substrate</name>
    </ligand>
</feature>
<feature type="binding site" evidence="1">
    <location>
        <position position="157"/>
    </location>
    <ligand>
        <name>Ca(2+)</name>
        <dbReference type="ChEBI" id="CHEBI:29108"/>
        <label>1</label>
    </ligand>
</feature>
<feature type="binding site" evidence="1">
    <location>
        <position position="158"/>
    </location>
    <ligand>
        <name>substrate</name>
    </ligand>
</feature>
<feature type="binding site" evidence="2">
    <location>
        <position position="198"/>
    </location>
    <ligand>
        <name>Ca(2+)</name>
        <dbReference type="ChEBI" id="CHEBI:29108"/>
        <label>1</label>
    </ligand>
</feature>
<feature type="binding site" evidence="2">
    <location>
        <position position="211"/>
    </location>
    <ligand>
        <name>Ca(2+)</name>
        <dbReference type="ChEBI" id="CHEBI:29108"/>
        <label>1</label>
    </ligand>
</feature>
<feature type="binding site" evidence="1">
    <location>
        <position position="240"/>
    </location>
    <ligand>
        <name>substrate</name>
    </ligand>
</feature>
<feature type="binding site" evidence="1">
    <location>
        <position position="242"/>
    </location>
    <ligand>
        <name>Ca(2+)</name>
        <dbReference type="ChEBI" id="CHEBI:29108"/>
        <label>2</label>
    </ligand>
</feature>
<feature type="binding site" evidence="1">
    <location>
        <begin position="245"/>
        <end position="246"/>
    </location>
    <ligand>
        <name>substrate</name>
    </ligand>
</feature>
<feature type="binding site" evidence="1">
    <location>
        <position position="246"/>
    </location>
    <ligand>
        <name>Ca(2+)</name>
        <dbReference type="ChEBI" id="CHEBI:29108"/>
        <label>1</label>
    </ligand>
</feature>
<feature type="binding site" evidence="1">
    <location>
        <position position="266"/>
    </location>
    <ligand>
        <name>Ca(2+)</name>
        <dbReference type="ChEBI" id="CHEBI:29108"/>
        <label>2</label>
    </ligand>
</feature>
<feature type="binding site" evidence="1">
    <location>
        <position position="270"/>
    </location>
    <ligand>
        <name>substrate</name>
    </ligand>
</feature>
<feature type="binding site" evidence="1">
    <location>
        <position position="333"/>
    </location>
    <ligand>
        <name>substrate</name>
    </ligand>
</feature>
<feature type="binding site" evidence="1">
    <location>
        <position position="380"/>
    </location>
    <ligand>
        <name>substrate</name>
    </ligand>
</feature>
<feature type="site" description="Transition state stabilizer" evidence="1">
    <location>
        <position position="333"/>
    </location>
</feature>
<feature type="glycosylation site" description="N-linked (GlcNAc...) asparagine" evidence="5">
    <location>
        <position position="233"/>
    </location>
</feature>
<feature type="disulfide bond" evidence="2">
    <location>
        <begin position="66"/>
        <end position="74"/>
    </location>
</feature>
<feature type="disulfide bond" evidence="2">
    <location>
        <begin position="186"/>
        <end position="200"/>
    </location>
</feature>
<feature type="disulfide bond" evidence="2">
    <location>
        <begin position="276"/>
        <end position="319"/>
    </location>
</feature>
<feature type="disulfide bond" evidence="2">
    <location>
        <begin position="475"/>
        <end position="510"/>
    </location>
</feature>
<feature type="sequence variant" description="In strain: CCRC 21164 and ATCC 26077 / CBS 2863.">
    <original>M</original>
    <variation>K</variation>
    <location>
        <position position="32"/>
    </location>
</feature>
<feature type="sequence variant" description="In strain: CCRC 21164.">
    <original>S</original>
    <variation>G</variation>
    <location>
        <position position="36"/>
    </location>
</feature>
<feature type="sequence variant" description="In strain: ATCC 26077 / CBS 2863.">
    <original>Y</original>
    <variation>I</variation>
    <location>
        <position position="73"/>
    </location>
</feature>
<feature type="sequence variant" description="In strain: CCRC 21164.">
    <original>N</original>
    <variation>S</variation>
    <location>
        <position position="280"/>
    </location>
</feature>
<feature type="sequence variant" description="In strain: CCRC 21164 and ATCC 26077 / CBS 2863.">
    <original>D</original>
    <variation>A</variation>
    <location>
        <position position="350"/>
    </location>
</feature>
<feature type="sequence variant" description="In strain: CCRC 21164 and ATCC 26077 / CBS 2863.">
    <original>L</original>
    <variation>S</variation>
    <location>
        <position position="479"/>
    </location>
</feature>
<feature type="sequence variant" description="In strain: CCRC 21164.">
    <original>S</original>
    <variation>F</variation>
    <location>
        <position position="483"/>
    </location>
</feature>
<reference key="1">
    <citation type="journal article" date="1989" name="Eur. J. Biochem.">
        <title>Analysis of the alpha-amylase gene of Schwanniomyces occidentalis and the secretion of its gene product in transformants of different yeast genera.</title>
        <authorList>
            <person name="Strasser A.W.M."/>
            <person name="Selk R."/>
            <person name="Dohmen R.J."/>
            <person name="Niermann T."/>
            <person name="Bielefeld M."/>
            <person name="Seeboth P."/>
            <person name="Tu G."/>
            <person name="Hollenberg C.P."/>
        </authorList>
    </citation>
    <scope>NUCLEOTIDE SEQUENCE [GENOMIC DNA]</scope>
    <scope>CATALYTIC ACTIVITY</scope>
    <scope>SUBCELLULAR LOCATION</scope>
    <source>
        <strain>ATCC 26076 / DSM 3794 / CBS 2864 / BCRC 22059 / NCYC 954 / NRRL Y-2470</strain>
    </source>
</reference>
<reference key="2">
    <citation type="journal article" date="1991" name="FEMS Microbiol. Lett.">
        <title>The nucleotide sequence of Schwanniomyces occidentalis alpha-amylase gene.</title>
        <authorList>
            <person name="Wu F.M."/>
            <person name="Wang T.T."/>
            <person name="Hsu W.H."/>
        </authorList>
    </citation>
    <scope>NUCLEOTIDE SEQUENCE [GENOMIC DNA]</scope>
    <source>
        <strain>BCRC 21164</strain>
    </source>
</reference>
<reference key="3">
    <citation type="journal article" date="1992" name="FEMS Microbiol. Lett.">
        <title>Nucleotide sequence of the extracellular alpha-amylase gene in the yeast Schwanniomyces occidentalis ATCC 26077.</title>
        <authorList>
            <person name="Park J.C."/>
            <person name="Bai S."/>
            <person name="Tai C.Y."/>
            <person name="Chun S.B."/>
        </authorList>
    </citation>
    <scope>NUCLEOTIDE SEQUENCE [GENOMIC DNA]</scope>
    <source>
        <strain>ATCC 26077 / CBS 2863 / JCM 8124 / BCRC 20332 / NBRC 1840 / NRRL Y-2477</strain>
    </source>
</reference>
<protein>
    <recommendedName>
        <fullName>Alpha-amylase 1</fullName>
        <ecNumber evidence="4">3.2.1.1</ecNumber>
    </recommendedName>
    <alternativeName>
        <fullName>1,4-alpha-D-glucan glucanohydrolase 1</fullName>
    </alternativeName>
</protein>
<evidence type="ECO:0000250" key="1">
    <source>
        <dbReference type="UniProtKB" id="P0C1B3"/>
    </source>
</evidence>
<evidence type="ECO:0000250" key="2">
    <source>
        <dbReference type="UniProtKB" id="P56271"/>
    </source>
</evidence>
<evidence type="ECO:0000255" key="3"/>
<evidence type="ECO:0000269" key="4">
    <source>
    </source>
</evidence>
<evidence type="ECO:0000305" key="5"/>
<gene>
    <name type="primary">AMY1</name>
</gene>
<sequence length="512" mass="56527">MRFSTEGFTSKVVAAILAFSRLVSAQPIIFDMRDVSSSADKWKDQSIYQIVTDRFARSDGSTTADCLVSDRKYCGGSYKGIIDKLDYIQGMGFTAIWISPVVEQIPDNTAYGYAYHGYWMKNIDELNTNFGTADELKQLASELHSRSMLLMVDVVYNHYAWNGDGSSVDYSSFTPFNQQSYFHDYCLITNYNDQTNVEDCWEGDTEVSLPDLSTEDNEVIGVFQTWVSDFVQNYSIDGLRIDSAKHVDTASLTKFEDASGVYNLGEVYQGDPTYTCPYQNYMKGVTNYPLYYPVYRFFSDTSATSSELTSMISTLQSSCSDVSLLGNFIENHDQVRFPSVTSDTSLIKNDMAFIILGDGIPIIYYGQEQGLNGGSDPANREALWLSGYNTDSEYYELISKLNQIRNQAIKKDSAYSTYKSSVVSSSDHYIATRKGSDANQLISIFNNLGSNGSQDITVSNTGYSSGDKVIDIISCNSVLAGDSGSLSVSISGGMPQVYAPSSVLSGSGICNQ</sequence>
<dbReference type="EC" id="3.2.1.1" evidence="4"/>
<dbReference type="EMBL" id="S77586">
    <property type="protein sequence ID" value="AAB21151.2"/>
    <property type="molecule type" value="Genomic_DNA"/>
</dbReference>
<dbReference type="EMBL" id="X16040">
    <property type="protein sequence ID" value="CAA34162.1"/>
    <property type="molecule type" value="Genomic_DNA"/>
</dbReference>
<dbReference type="EMBL" id="X62079">
    <property type="protein sequence ID" value="CAA43995.1"/>
    <property type="molecule type" value="Genomic_DNA"/>
</dbReference>
<dbReference type="EMBL" id="S38381">
    <property type="protein sequence ID" value="AAB22383.2"/>
    <property type="molecule type" value="Genomic_DNA"/>
</dbReference>
<dbReference type="PIR" id="S06115">
    <property type="entry name" value="S06115"/>
</dbReference>
<dbReference type="PIR" id="S23355">
    <property type="entry name" value="S23355"/>
</dbReference>
<dbReference type="SMR" id="P19269"/>
<dbReference type="CAZy" id="GH13">
    <property type="family name" value="Glycoside Hydrolase Family 13"/>
</dbReference>
<dbReference type="GlyCosmos" id="P19269">
    <property type="glycosylation" value="1 site, No reported glycans"/>
</dbReference>
<dbReference type="GO" id="GO:0005576">
    <property type="term" value="C:extracellular region"/>
    <property type="evidence" value="ECO:0007669"/>
    <property type="project" value="UniProtKB-SubCell"/>
</dbReference>
<dbReference type="GO" id="GO:0004556">
    <property type="term" value="F:alpha-amylase activity"/>
    <property type="evidence" value="ECO:0007669"/>
    <property type="project" value="UniProtKB-EC"/>
</dbReference>
<dbReference type="GO" id="GO:0005509">
    <property type="term" value="F:calcium ion binding"/>
    <property type="evidence" value="ECO:0007669"/>
    <property type="project" value="InterPro"/>
</dbReference>
<dbReference type="GO" id="GO:0016052">
    <property type="term" value="P:carbohydrate catabolic process"/>
    <property type="evidence" value="ECO:0007669"/>
    <property type="project" value="InterPro"/>
</dbReference>
<dbReference type="CDD" id="cd11319">
    <property type="entry name" value="AmyAc_euk_AmyA"/>
    <property type="match status" value="1"/>
</dbReference>
<dbReference type="FunFam" id="3.20.20.80:FF:000120">
    <property type="entry name" value="Alpha-amylase A"/>
    <property type="match status" value="1"/>
</dbReference>
<dbReference type="Gene3D" id="3.20.20.80">
    <property type="entry name" value="Glycosidases"/>
    <property type="match status" value="1"/>
</dbReference>
<dbReference type="Gene3D" id="2.60.40.1180">
    <property type="entry name" value="Golgi alpha-mannosidase II"/>
    <property type="match status" value="1"/>
</dbReference>
<dbReference type="InterPro" id="IPR013777">
    <property type="entry name" value="A-amylase-like"/>
</dbReference>
<dbReference type="InterPro" id="IPR015340">
    <property type="entry name" value="A_amylase_C_dom"/>
</dbReference>
<dbReference type="InterPro" id="IPR006047">
    <property type="entry name" value="Glyco_hydro_13_cat_dom"/>
</dbReference>
<dbReference type="InterPro" id="IPR013780">
    <property type="entry name" value="Glyco_hydro_b"/>
</dbReference>
<dbReference type="InterPro" id="IPR017853">
    <property type="entry name" value="Glycoside_hydrolase_SF"/>
</dbReference>
<dbReference type="PANTHER" id="PTHR10357:SF215">
    <property type="entry name" value="ALPHA-AMYLASE 1"/>
    <property type="match status" value="1"/>
</dbReference>
<dbReference type="PANTHER" id="PTHR10357">
    <property type="entry name" value="ALPHA-AMYLASE FAMILY MEMBER"/>
    <property type="match status" value="1"/>
</dbReference>
<dbReference type="Pfam" id="PF09260">
    <property type="entry name" value="A_amylase_dom_C"/>
    <property type="match status" value="1"/>
</dbReference>
<dbReference type="Pfam" id="PF00128">
    <property type="entry name" value="Alpha-amylase"/>
    <property type="match status" value="1"/>
</dbReference>
<dbReference type="PIRSF" id="PIRSF001024">
    <property type="entry name" value="Alph-amyl_fung"/>
    <property type="match status" value="1"/>
</dbReference>
<dbReference type="SMART" id="SM00642">
    <property type="entry name" value="Aamy"/>
    <property type="match status" value="1"/>
</dbReference>
<dbReference type="SUPFAM" id="SSF51445">
    <property type="entry name" value="(Trans)glycosidases"/>
    <property type="match status" value="1"/>
</dbReference>
<dbReference type="SUPFAM" id="SSF51011">
    <property type="entry name" value="Glycosyl hydrolase domain"/>
    <property type="match status" value="1"/>
</dbReference>
<comment type="catalytic activity">
    <reaction evidence="4">
        <text>Endohydrolysis of (1-&gt;4)-alpha-D-glucosidic linkages in polysaccharides containing three or more (1-&gt;4)-alpha-linked D-glucose units.</text>
        <dbReference type="EC" id="3.2.1.1"/>
    </reaction>
</comment>
<comment type="cofactor">
    <cofactor evidence="1">
        <name>Ca(2+)</name>
        <dbReference type="ChEBI" id="CHEBI:29108"/>
    </cofactor>
    <text evidence="1">Binds 2 calcium ions per subunit. Calcium is inhibitory at high concentrations.</text>
</comment>
<comment type="activity regulation">
    <text>Alpha-amylase expression underlies catabolite repression by glucose.</text>
</comment>
<comment type="subcellular location">
    <subcellularLocation>
        <location evidence="4">Secreted</location>
    </subcellularLocation>
</comment>
<comment type="similarity">
    <text evidence="5">Belongs to the glycosyl hydrolase 13 family.</text>
</comment>
<keyword id="KW-0106">Calcium</keyword>
<keyword id="KW-0119">Carbohydrate metabolism</keyword>
<keyword id="KW-1015">Disulfide bond</keyword>
<keyword id="KW-0325">Glycoprotein</keyword>
<keyword id="KW-0326">Glycosidase</keyword>
<keyword id="KW-0378">Hydrolase</keyword>
<keyword id="KW-0479">Metal-binding</keyword>
<keyword id="KW-0964">Secreted</keyword>
<keyword id="KW-0732">Signal</keyword>
<name>AMY1_SCHOC</name>
<accession>P19269</accession>